<organism>
    <name type="scientific">Schizosaccharomyces pombe (strain 972 / ATCC 24843)</name>
    <name type="common">Fission yeast</name>
    <dbReference type="NCBI Taxonomy" id="284812"/>
    <lineage>
        <taxon>Eukaryota</taxon>
        <taxon>Fungi</taxon>
        <taxon>Dikarya</taxon>
        <taxon>Ascomycota</taxon>
        <taxon>Taphrinomycotina</taxon>
        <taxon>Schizosaccharomycetes</taxon>
        <taxon>Schizosaccharomycetales</taxon>
        <taxon>Schizosaccharomycetaceae</taxon>
        <taxon>Schizosaccharomyces</taxon>
    </lineage>
</organism>
<name>PPK2_SCHPO</name>
<sequence>MLSNSTFHEHHAKSHFHNNACQSNASSSACRASEDHLVSSFPNDSIIDLQPSRPAPEPPKKKFGYYARRLSGHFLSLIHGSGNSTRSPPFHLQNQKSNGQSEVWHSSDDSGSPKRLNRSRSSKEDMYRRRSLHGLPSLSRRNSKKSSTLSRSISLHLRSESAPISLPIHLYKSYSYNHSPSSLPTVLNSQALSSPPVPTTPDEVSTNRLSSSTSSMNCRNLVPDNFNISIRPNTTNYRSSIQENSNGNRDSISPSAYDAPLLHNVDTQSIDGFVSVASHFSSASTAESLDDGHSATTIQQGDVSSYPLSRSVSTPVPMSPISISPAKPSPQSPKLSQSAVGHPSSSIPAAAMHKVSYSDDLMRFVAREKYYLQIVDCLCTQKDPLFFYTDFTKICQQDTVGTYVARQTLDKEVVVIKRFDISAVTHRRLLLEELQRLSGLSHKNLIRYNESFWYLNNIWSVFEYKDPSTKLSALIPKYFFSELNIASICYEISSGLAFLHNSGIAHHNLTTECIYLTKSSCLKIGNYAFSSPYIERQTNRGAVSHVPDWLIEKNYKEGFMKDVKSLGLVALEIFQGQPNFFRKSIQSIQLTPNANVLVNRVRGLISQEFKEFLLQTLQAETLQGPNINMLLETSSFLEKRQTLNFEICLNNLNLRERKASRYSYL</sequence>
<dbReference type="EMBL" id="CU329670">
    <property type="protein sequence ID" value="CAA94704.2"/>
    <property type="molecule type" value="Genomic_DNA"/>
</dbReference>
<dbReference type="PIR" id="T37581">
    <property type="entry name" value="T37581"/>
</dbReference>
<dbReference type="RefSeq" id="NP_594646.1">
    <property type="nucleotide sequence ID" value="NM_001020074.2"/>
</dbReference>
<dbReference type="SMR" id="Q10447"/>
<dbReference type="BioGRID" id="279532">
    <property type="interactions" value="29"/>
</dbReference>
<dbReference type="FunCoup" id="Q10447">
    <property type="interactions" value="527"/>
</dbReference>
<dbReference type="STRING" id="284812.Q10447"/>
<dbReference type="iPTMnet" id="Q10447"/>
<dbReference type="PaxDb" id="4896-SPAC12B10.14c.1"/>
<dbReference type="EnsemblFungi" id="SPAC12B10.14c.1">
    <property type="protein sequence ID" value="SPAC12B10.14c.1:pep"/>
    <property type="gene ID" value="SPAC12B10.14c"/>
</dbReference>
<dbReference type="GeneID" id="2543100"/>
<dbReference type="KEGG" id="spo:2543100"/>
<dbReference type="PomBase" id="SPAC12B10.14c"/>
<dbReference type="VEuPathDB" id="FungiDB:SPAC12B10.14c"/>
<dbReference type="eggNOG" id="KOG0578">
    <property type="taxonomic scope" value="Eukaryota"/>
</dbReference>
<dbReference type="HOGENOM" id="CLU_412864_0_0_1"/>
<dbReference type="InParanoid" id="Q10447"/>
<dbReference type="Reactome" id="R-SPO-6798695">
    <property type="pathway name" value="Neutrophil degranulation"/>
</dbReference>
<dbReference type="Reactome" id="R-SPO-8980692">
    <property type="pathway name" value="RHOA GTPase cycle"/>
</dbReference>
<dbReference type="Reactome" id="R-SPO-9013026">
    <property type="pathway name" value="RHOB GTPase cycle"/>
</dbReference>
<dbReference type="Reactome" id="R-SPO-9013106">
    <property type="pathway name" value="RHOC GTPase cycle"/>
</dbReference>
<dbReference type="PRO" id="PR:Q10447"/>
<dbReference type="Proteomes" id="UP000002485">
    <property type="component" value="Chromosome I"/>
</dbReference>
<dbReference type="GO" id="GO:0051286">
    <property type="term" value="C:cell tip"/>
    <property type="evidence" value="ECO:0007005"/>
    <property type="project" value="PomBase"/>
</dbReference>
<dbReference type="GO" id="GO:0005737">
    <property type="term" value="C:cytoplasm"/>
    <property type="evidence" value="ECO:0000318"/>
    <property type="project" value="GO_Central"/>
</dbReference>
<dbReference type="GO" id="GO:0005829">
    <property type="term" value="C:cytosol"/>
    <property type="evidence" value="ECO:0007005"/>
    <property type="project" value="PomBase"/>
</dbReference>
<dbReference type="GO" id="GO:0005524">
    <property type="term" value="F:ATP binding"/>
    <property type="evidence" value="ECO:0007669"/>
    <property type="project" value="UniProtKB-KW"/>
</dbReference>
<dbReference type="GO" id="GO:0004672">
    <property type="term" value="F:protein kinase activity"/>
    <property type="evidence" value="ECO:0007669"/>
    <property type="project" value="InterPro"/>
</dbReference>
<dbReference type="GO" id="GO:0035556">
    <property type="term" value="P:intracellular signal transduction"/>
    <property type="evidence" value="ECO:0000318"/>
    <property type="project" value="GO_Central"/>
</dbReference>
<dbReference type="Gene3D" id="3.30.200.20">
    <property type="entry name" value="Phosphorylase Kinase, domain 1"/>
    <property type="match status" value="1"/>
</dbReference>
<dbReference type="Gene3D" id="1.10.510.10">
    <property type="entry name" value="Transferase(Phosphotransferase) domain 1"/>
    <property type="match status" value="1"/>
</dbReference>
<dbReference type="InterPro" id="IPR011009">
    <property type="entry name" value="Kinase-like_dom_sf"/>
</dbReference>
<dbReference type="InterPro" id="IPR000719">
    <property type="entry name" value="Prot_kinase_dom"/>
</dbReference>
<dbReference type="InterPro" id="IPR050629">
    <property type="entry name" value="STE20/SPS1-PAK"/>
</dbReference>
<dbReference type="PANTHER" id="PTHR48012:SF2">
    <property type="entry name" value="STERILE20-LIKE KINASE, ISOFORM B"/>
    <property type="match status" value="1"/>
</dbReference>
<dbReference type="PANTHER" id="PTHR48012">
    <property type="entry name" value="STERILE20-LIKE KINASE, ISOFORM B-RELATED"/>
    <property type="match status" value="1"/>
</dbReference>
<dbReference type="Pfam" id="PF00069">
    <property type="entry name" value="Pkinase"/>
    <property type="match status" value="1"/>
</dbReference>
<dbReference type="SMART" id="SM00220">
    <property type="entry name" value="S_TKc"/>
    <property type="match status" value="1"/>
</dbReference>
<dbReference type="SUPFAM" id="SSF56112">
    <property type="entry name" value="Protein kinase-like (PK-like)"/>
    <property type="match status" value="1"/>
</dbReference>
<dbReference type="PROSITE" id="PS50011">
    <property type="entry name" value="PROTEIN_KINASE_DOM"/>
    <property type="match status" value="1"/>
</dbReference>
<reference key="1">
    <citation type="journal article" date="2002" name="Nature">
        <title>The genome sequence of Schizosaccharomyces pombe.</title>
        <authorList>
            <person name="Wood V."/>
            <person name="Gwilliam R."/>
            <person name="Rajandream M.A."/>
            <person name="Lyne M.H."/>
            <person name="Lyne R."/>
            <person name="Stewart A."/>
            <person name="Sgouros J.G."/>
            <person name="Peat N."/>
            <person name="Hayles J."/>
            <person name="Baker S.G."/>
            <person name="Basham D."/>
            <person name="Bowman S."/>
            <person name="Brooks K."/>
            <person name="Brown D."/>
            <person name="Brown S."/>
            <person name="Chillingworth T."/>
            <person name="Churcher C.M."/>
            <person name="Collins M."/>
            <person name="Connor R."/>
            <person name="Cronin A."/>
            <person name="Davis P."/>
            <person name="Feltwell T."/>
            <person name="Fraser A."/>
            <person name="Gentles S."/>
            <person name="Goble A."/>
            <person name="Hamlin N."/>
            <person name="Harris D.E."/>
            <person name="Hidalgo J."/>
            <person name="Hodgson G."/>
            <person name="Holroyd S."/>
            <person name="Hornsby T."/>
            <person name="Howarth S."/>
            <person name="Huckle E.J."/>
            <person name="Hunt S."/>
            <person name="Jagels K."/>
            <person name="James K.D."/>
            <person name="Jones L."/>
            <person name="Jones M."/>
            <person name="Leather S."/>
            <person name="McDonald S."/>
            <person name="McLean J."/>
            <person name="Mooney P."/>
            <person name="Moule S."/>
            <person name="Mungall K.L."/>
            <person name="Murphy L.D."/>
            <person name="Niblett D."/>
            <person name="Odell C."/>
            <person name="Oliver K."/>
            <person name="O'Neil S."/>
            <person name="Pearson D."/>
            <person name="Quail M.A."/>
            <person name="Rabbinowitsch E."/>
            <person name="Rutherford K.M."/>
            <person name="Rutter S."/>
            <person name="Saunders D."/>
            <person name="Seeger K."/>
            <person name="Sharp S."/>
            <person name="Skelton J."/>
            <person name="Simmonds M.N."/>
            <person name="Squares R."/>
            <person name="Squares S."/>
            <person name="Stevens K."/>
            <person name="Taylor K."/>
            <person name="Taylor R.G."/>
            <person name="Tivey A."/>
            <person name="Walsh S.V."/>
            <person name="Warren T."/>
            <person name="Whitehead S."/>
            <person name="Woodward J.R."/>
            <person name="Volckaert G."/>
            <person name="Aert R."/>
            <person name="Robben J."/>
            <person name="Grymonprez B."/>
            <person name="Weltjens I."/>
            <person name="Vanstreels E."/>
            <person name="Rieger M."/>
            <person name="Schaefer M."/>
            <person name="Mueller-Auer S."/>
            <person name="Gabel C."/>
            <person name="Fuchs M."/>
            <person name="Duesterhoeft A."/>
            <person name="Fritzc C."/>
            <person name="Holzer E."/>
            <person name="Moestl D."/>
            <person name="Hilbert H."/>
            <person name="Borzym K."/>
            <person name="Langer I."/>
            <person name="Beck A."/>
            <person name="Lehrach H."/>
            <person name="Reinhardt R."/>
            <person name="Pohl T.M."/>
            <person name="Eger P."/>
            <person name="Zimmermann W."/>
            <person name="Wedler H."/>
            <person name="Wambutt R."/>
            <person name="Purnelle B."/>
            <person name="Goffeau A."/>
            <person name="Cadieu E."/>
            <person name="Dreano S."/>
            <person name="Gloux S."/>
            <person name="Lelaure V."/>
            <person name="Mottier S."/>
            <person name="Galibert F."/>
            <person name="Aves S.J."/>
            <person name="Xiang Z."/>
            <person name="Hunt C."/>
            <person name="Moore K."/>
            <person name="Hurst S.M."/>
            <person name="Lucas M."/>
            <person name="Rochet M."/>
            <person name="Gaillardin C."/>
            <person name="Tallada V.A."/>
            <person name="Garzon A."/>
            <person name="Thode G."/>
            <person name="Daga R.R."/>
            <person name="Cruzado L."/>
            <person name="Jimenez J."/>
            <person name="Sanchez M."/>
            <person name="del Rey F."/>
            <person name="Benito J."/>
            <person name="Dominguez A."/>
            <person name="Revuelta J.L."/>
            <person name="Moreno S."/>
            <person name="Armstrong J."/>
            <person name="Forsburg S.L."/>
            <person name="Cerutti L."/>
            <person name="Lowe T."/>
            <person name="McCombie W.R."/>
            <person name="Paulsen I."/>
            <person name="Potashkin J."/>
            <person name="Shpakovski G.V."/>
            <person name="Ussery D."/>
            <person name="Barrell B.G."/>
            <person name="Nurse P."/>
        </authorList>
    </citation>
    <scope>NUCLEOTIDE SEQUENCE [LARGE SCALE GENOMIC DNA]</scope>
    <source>
        <strain>972 / ATCC 24843</strain>
    </source>
</reference>
<reference key="2">
    <citation type="journal article" date="2005" name="Eukaryot. Cell">
        <title>Systematic deletion analysis of fission yeast protein kinases.</title>
        <authorList>
            <person name="Bimbo A."/>
            <person name="Jia Y."/>
            <person name="Poh S.L."/>
            <person name="Karuturi R.K.M."/>
            <person name="den Elzen N."/>
            <person name="Peng X."/>
            <person name="Zheng L."/>
            <person name="O'Connell M."/>
            <person name="Liu E.T."/>
            <person name="Balasubramanian M.K."/>
            <person name="Liu J."/>
        </authorList>
    </citation>
    <scope>IDENTIFICATION</scope>
</reference>
<reference key="3">
    <citation type="journal article" date="2006" name="Nat. Biotechnol.">
        <title>ORFeome cloning and global analysis of protein localization in the fission yeast Schizosaccharomyces pombe.</title>
        <authorList>
            <person name="Matsuyama A."/>
            <person name="Arai R."/>
            <person name="Yashiroda Y."/>
            <person name="Shirai A."/>
            <person name="Kamata A."/>
            <person name="Sekido S."/>
            <person name="Kobayashi Y."/>
            <person name="Hashimoto A."/>
            <person name="Hamamoto M."/>
            <person name="Hiraoka Y."/>
            <person name="Horinouchi S."/>
            <person name="Yoshida M."/>
        </authorList>
    </citation>
    <scope>SUBCELLULAR LOCATION [LARGE SCALE ANALYSIS]</scope>
</reference>
<reference key="4">
    <citation type="journal article" date="2008" name="J. Proteome Res.">
        <title>Phosphoproteome analysis of fission yeast.</title>
        <authorList>
            <person name="Wilson-Grady J.T."/>
            <person name="Villen J."/>
            <person name="Gygi S.P."/>
        </authorList>
    </citation>
    <scope>PHOSPHORYLATION [LARGE SCALE ANALYSIS] AT SER-358</scope>
    <scope>IDENTIFICATION BY MASS SPECTROMETRY</scope>
</reference>
<gene>
    <name type="primary">ppk2</name>
    <name type="ORF">SPAC12B10.14c</name>
</gene>
<evidence type="ECO:0000255" key="1">
    <source>
        <dbReference type="PROSITE-ProRule" id="PRU00159"/>
    </source>
</evidence>
<evidence type="ECO:0000256" key="2">
    <source>
        <dbReference type="SAM" id="MobiDB-lite"/>
    </source>
</evidence>
<evidence type="ECO:0000269" key="3">
    <source>
    </source>
</evidence>
<evidence type="ECO:0000269" key="4">
    <source>
    </source>
</evidence>
<evidence type="ECO:0000305" key="5"/>
<comment type="subcellular location">
    <subcellularLocation>
        <location evidence="3">Cytoplasm</location>
    </subcellularLocation>
    <text>Located at the cell tip.</text>
</comment>
<comment type="domain">
    <text>The protein kinase domain is predicted to be catalytically inactive.</text>
</comment>
<comment type="caution">
    <text evidence="5">Lacks the active site aspartate.</text>
</comment>
<accession>Q10447</accession>
<keyword id="KW-0067">ATP-binding</keyword>
<keyword id="KW-0963">Cytoplasm</keyword>
<keyword id="KW-0547">Nucleotide-binding</keyword>
<keyword id="KW-0597">Phosphoprotein</keyword>
<keyword id="KW-1185">Reference proteome</keyword>
<proteinExistence type="evidence at protein level"/>
<protein>
    <recommendedName>
        <fullName>Protein kinase domain-containing protein ppk2</fullName>
    </recommendedName>
</protein>
<feature type="chain" id="PRO_0000086829" description="Protein kinase domain-containing protein ppk2">
    <location>
        <begin position="1"/>
        <end position="665"/>
    </location>
</feature>
<feature type="domain" description="Protein kinase" evidence="1">
    <location>
        <begin position="388"/>
        <end position="637"/>
    </location>
</feature>
<feature type="region of interest" description="Disordered" evidence="2">
    <location>
        <begin position="42"/>
        <end position="63"/>
    </location>
</feature>
<feature type="region of interest" description="Disordered" evidence="2">
    <location>
        <begin position="82"/>
        <end position="152"/>
    </location>
</feature>
<feature type="region of interest" description="Disordered" evidence="2">
    <location>
        <begin position="187"/>
        <end position="217"/>
    </location>
</feature>
<feature type="region of interest" description="Disordered" evidence="2">
    <location>
        <begin position="286"/>
        <end position="343"/>
    </location>
</feature>
<feature type="compositionally biased region" description="Polar residues" evidence="2">
    <location>
        <begin position="82"/>
        <end position="104"/>
    </location>
</feature>
<feature type="compositionally biased region" description="Low complexity" evidence="2">
    <location>
        <begin position="137"/>
        <end position="152"/>
    </location>
</feature>
<feature type="compositionally biased region" description="Low complexity" evidence="2">
    <location>
        <begin position="206"/>
        <end position="217"/>
    </location>
</feature>
<feature type="compositionally biased region" description="Polar residues" evidence="2">
    <location>
        <begin position="294"/>
        <end position="316"/>
    </location>
</feature>
<feature type="binding site" evidence="1">
    <location>
        <begin position="394"/>
        <end position="402"/>
    </location>
    <ligand>
        <name>ATP</name>
        <dbReference type="ChEBI" id="CHEBI:30616"/>
    </ligand>
</feature>
<feature type="binding site" evidence="1">
    <location>
        <position position="417"/>
    </location>
    <ligand>
        <name>ATP</name>
        <dbReference type="ChEBI" id="CHEBI:30616"/>
    </ligand>
</feature>
<feature type="modified residue" description="Phosphoserine" evidence="4">
    <location>
        <position position="358"/>
    </location>
</feature>